<proteinExistence type="inferred from homology"/>
<sequence>MILKELPKQRPNDFTKVLQDVEKIISYVKQKGDEALIELEEKFDKVKLTSIKFPEVDKLASQISQDLKMAIDVIFTQIYEFNNSIKPPNIIGGSANGIDYGIMWKSIERVGIYVPGGEKAYPSTLLMAGVPALVAGVKEIYVSSPPTKINSAIAYISLKLGVKEIYAIGGAQAIAAMAYGTQTVKKVDKIVGPGNIYVQAAKYLVSSDVGIDGIEGPTELVIIADETANPSNIILDLKAQAEHGRSTFLVLLSNSDKIINFVSKELDVDSNIYYVIKVNSIDEAIDIANEIAPEHLSLQISSAREYLPKVKNAGAVTLGNTPPAIIDYSAGPNHILPTNGWAKIRGGISVYDYLKMIMYASTSNPEKKLVEASKILAKYEGFVFHADSIGVRYE</sequence>
<keyword id="KW-0028">Amino-acid biosynthesis</keyword>
<keyword id="KW-0368">Histidine biosynthesis</keyword>
<keyword id="KW-0479">Metal-binding</keyword>
<keyword id="KW-0520">NAD</keyword>
<keyword id="KW-0560">Oxidoreductase</keyword>
<keyword id="KW-1185">Reference proteome</keyword>
<keyword id="KW-0862">Zinc</keyword>
<gene>
    <name evidence="1" type="primary">hisD</name>
    <name type="ordered locus">STK_14640</name>
</gene>
<organism>
    <name type="scientific">Sulfurisphaera tokodaii (strain DSM 16993 / JCM 10545 / NBRC 100140 / 7)</name>
    <name type="common">Sulfolobus tokodaii</name>
    <dbReference type="NCBI Taxonomy" id="273063"/>
    <lineage>
        <taxon>Archaea</taxon>
        <taxon>Thermoproteota</taxon>
        <taxon>Thermoprotei</taxon>
        <taxon>Sulfolobales</taxon>
        <taxon>Sulfolobaceae</taxon>
        <taxon>Sulfurisphaera</taxon>
    </lineage>
</organism>
<name>HISX_SULTO</name>
<evidence type="ECO:0000255" key="1">
    <source>
        <dbReference type="HAMAP-Rule" id="MF_01024"/>
    </source>
</evidence>
<comment type="function">
    <text evidence="1">Catalyzes the sequential NAD-dependent oxidations of L-histidinol to L-histidinaldehyde and then to L-histidine.</text>
</comment>
<comment type="catalytic activity">
    <reaction evidence="1">
        <text>L-histidinol + 2 NAD(+) + H2O = L-histidine + 2 NADH + 3 H(+)</text>
        <dbReference type="Rhea" id="RHEA:20641"/>
        <dbReference type="ChEBI" id="CHEBI:15377"/>
        <dbReference type="ChEBI" id="CHEBI:15378"/>
        <dbReference type="ChEBI" id="CHEBI:57540"/>
        <dbReference type="ChEBI" id="CHEBI:57595"/>
        <dbReference type="ChEBI" id="CHEBI:57699"/>
        <dbReference type="ChEBI" id="CHEBI:57945"/>
        <dbReference type="EC" id="1.1.1.23"/>
    </reaction>
</comment>
<comment type="cofactor">
    <cofactor evidence="1">
        <name>Zn(2+)</name>
        <dbReference type="ChEBI" id="CHEBI:29105"/>
    </cofactor>
    <text evidence="1">Binds 1 zinc ion per subunit.</text>
</comment>
<comment type="pathway">
    <text evidence="1">Amino-acid biosynthesis; L-histidine biosynthesis; L-histidine from 5-phospho-alpha-D-ribose 1-diphosphate: step 9/9.</text>
</comment>
<comment type="similarity">
    <text evidence="1">Belongs to the histidinol dehydrogenase family.</text>
</comment>
<accession>Q970Y9</accession>
<reference key="1">
    <citation type="journal article" date="2001" name="DNA Res.">
        <title>Complete genome sequence of an aerobic thermoacidophilic Crenarchaeon, Sulfolobus tokodaii strain7.</title>
        <authorList>
            <person name="Kawarabayasi Y."/>
            <person name="Hino Y."/>
            <person name="Horikawa H."/>
            <person name="Jin-no K."/>
            <person name="Takahashi M."/>
            <person name="Sekine M."/>
            <person name="Baba S."/>
            <person name="Ankai A."/>
            <person name="Kosugi H."/>
            <person name="Hosoyama A."/>
            <person name="Fukui S."/>
            <person name="Nagai Y."/>
            <person name="Nishijima K."/>
            <person name="Otsuka R."/>
            <person name="Nakazawa H."/>
            <person name="Takamiya M."/>
            <person name="Kato Y."/>
            <person name="Yoshizawa T."/>
            <person name="Tanaka T."/>
            <person name="Kudoh Y."/>
            <person name="Yamazaki J."/>
            <person name="Kushida N."/>
            <person name="Oguchi A."/>
            <person name="Aoki K."/>
            <person name="Masuda S."/>
            <person name="Yanagii M."/>
            <person name="Nishimura M."/>
            <person name="Yamagishi A."/>
            <person name="Oshima T."/>
            <person name="Kikuchi H."/>
        </authorList>
    </citation>
    <scope>NUCLEOTIDE SEQUENCE [LARGE SCALE GENOMIC DNA]</scope>
    <source>
        <strain>DSM 16993 / JCM 10545 / NBRC 100140 / 7</strain>
    </source>
</reference>
<feature type="chain" id="PRO_0000135907" description="Histidinol dehydrogenase">
    <location>
        <begin position="1"/>
        <end position="394"/>
    </location>
</feature>
<feature type="active site" description="Proton acceptor" evidence="1">
    <location>
        <position position="294"/>
    </location>
</feature>
<feature type="active site" description="Proton acceptor" evidence="1">
    <location>
        <position position="295"/>
    </location>
</feature>
<feature type="binding site" evidence="1">
    <location>
        <position position="113"/>
    </location>
    <ligand>
        <name>NAD(+)</name>
        <dbReference type="ChEBI" id="CHEBI:57540"/>
    </ligand>
</feature>
<feature type="binding site" evidence="1">
    <location>
        <position position="172"/>
    </location>
    <ligand>
        <name>NAD(+)</name>
        <dbReference type="ChEBI" id="CHEBI:57540"/>
    </ligand>
</feature>
<feature type="binding site" evidence="1">
    <location>
        <position position="195"/>
    </location>
    <ligand>
        <name>NAD(+)</name>
        <dbReference type="ChEBI" id="CHEBI:57540"/>
    </ligand>
</feature>
<feature type="binding site" evidence="1">
    <location>
        <position position="218"/>
    </location>
    <ligand>
        <name>substrate</name>
    </ligand>
</feature>
<feature type="binding site" evidence="1">
    <location>
        <position position="240"/>
    </location>
    <ligand>
        <name>substrate</name>
    </ligand>
</feature>
<feature type="binding site" evidence="1">
    <location>
        <position position="240"/>
    </location>
    <ligand>
        <name>Zn(2+)</name>
        <dbReference type="ChEBI" id="CHEBI:29105"/>
    </ligand>
</feature>
<feature type="binding site" evidence="1">
    <location>
        <position position="243"/>
    </location>
    <ligand>
        <name>substrate</name>
    </ligand>
</feature>
<feature type="binding site" evidence="1">
    <location>
        <position position="243"/>
    </location>
    <ligand>
        <name>Zn(2+)</name>
        <dbReference type="ChEBI" id="CHEBI:29105"/>
    </ligand>
</feature>
<feature type="binding site" evidence="1">
    <location>
        <position position="295"/>
    </location>
    <ligand>
        <name>substrate</name>
    </ligand>
</feature>
<feature type="binding site" evidence="1">
    <location>
        <position position="327"/>
    </location>
    <ligand>
        <name>substrate</name>
    </ligand>
</feature>
<feature type="binding site" evidence="1">
    <location>
        <position position="327"/>
    </location>
    <ligand>
        <name>Zn(2+)</name>
        <dbReference type="ChEBI" id="CHEBI:29105"/>
    </ligand>
</feature>
<feature type="binding site" evidence="1">
    <location>
        <position position="380"/>
    </location>
    <ligand>
        <name>substrate</name>
    </ligand>
</feature>
<feature type="binding site" evidence="1">
    <location>
        <position position="385"/>
    </location>
    <ligand>
        <name>substrate</name>
    </ligand>
</feature>
<feature type="binding site" evidence="1">
    <location>
        <position position="385"/>
    </location>
    <ligand>
        <name>Zn(2+)</name>
        <dbReference type="ChEBI" id="CHEBI:29105"/>
    </ligand>
</feature>
<dbReference type="EC" id="1.1.1.23" evidence="1"/>
<dbReference type="EMBL" id="BA000023">
    <property type="protein sequence ID" value="BAB66534.1"/>
    <property type="molecule type" value="Genomic_DNA"/>
</dbReference>
<dbReference type="RefSeq" id="WP_010979512.1">
    <property type="nucleotide sequence ID" value="NC_003106.2"/>
</dbReference>
<dbReference type="SMR" id="Q970Y9"/>
<dbReference type="STRING" id="273063.STK_14640"/>
<dbReference type="GeneID" id="1459498"/>
<dbReference type="KEGG" id="sto:STK_14640"/>
<dbReference type="PATRIC" id="fig|273063.9.peg.1669"/>
<dbReference type="eggNOG" id="arCOG04352">
    <property type="taxonomic scope" value="Archaea"/>
</dbReference>
<dbReference type="OrthoDB" id="36308at2157"/>
<dbReference type="UniPathway" id="UPA00031">
    <property type="reaction ID" value="UER00014"/>
</dbReference>
<dbReference type="Proteomes" id="UP000001015">
    <property type="component" value="Chromosome"/>
</dbReference>
<dbReference type="GO" id="GO:0005737">
    <property type="term" value="C:cytoplasm"/>
    <property type="evidence" value="ECO:0007669"/>
    <property type="project" value="TreeGrafter"/>
</dbReference>
<dbReference type="GO" id="GO:0004399">
    <property type="term" value="F:histidinol dehydrogenase activity"/>
    <property type="evidence" value="ECO:0007669"/>
    <property type="project" value="UniProtKB-UniRule"/>
</dbReference>
<dbReference type="GO" id="GO:0051287">
    <property type="term" value="F:NAD binding"/>
    <property type="evidence" value="ECO:0007669"/>
    <property type="project" value="InterPro"/>
</dbReference>
<dbReference type="GO" id="GO:0008270">
    <property type="term" value="F:zinc ion binding"/>
    <property type="evidence" value="ECO:0007669"/>
    <property type="project" value="UniProtKB-UniRule"/>
</dbReference>
<dbReference type="GO" id="GO:0000105">
    <property type="term" value="P:L-histidine biosynthetic process"/>
    <property type="evidence" value="ECO:0007669"/>
    <property type="project" value="UniProtKB-UniRule"/>
</dbReference>
<dbReference type="CDD" id="cd06572">
    <property type="entry name" value="Histidinol_dh"/>
    <property type="match status" value="1"/>
</dbReference>
<dbReference type="FunFam" id="3.40.50.1980:FF:000001">
    <property type="entry name" value="Histidinol dehydrogenase"/>
    <property type="match status" value="1"/>
</dbReference>
<dbReference type="Gene3D" id="1.20.5.1300">
    <property type="match status" value="1"/>
</dbReference>
<dbReference type="Gene3D" id="3.40.50.1980">
    <property type="entry name" value="Nitrogenase molybdenum iron protein domain"/>
    <property type="match status" value="2"/>
</dbReference>
<dbReference type="HAMAP" id="MF_01024">
    <property type="entry name" value="HisD"/>
    <property type="match status" value="1"/>
</dbReference>
<dbReference type="InterPro" id="IPR016161">
    <property type="entry name" value="Ald_DH/histidinol_DH"/>
</dbReference>
<dbReference type="InterPro" id="IPR001692">
    <property type="entry name" value="Histidinol_DH_CS"/>
</dbReference>
<dbReference type="InterPro" id="IPR022695">
    <property type="entry name" value="Histidinol_DH_monofunct"/>
</dbReference>
<dbReference type="InterPro" id="IPR012131">
    <property type="entry name" value="Hstdl_DH"/>
</dbReference>
<dbReference type="NCBIfam" id="TIGR00069">
    <property type="entry name" value="hisD"/>
    <property type="match status" value="1"/>
</dbReference>
<dbReference type="PANTHER" id="PTHR21256:SF2">
    <property type="entry name" value="HISTIDINE BIOSYNTHESIS TRIFUNCTIONAL PROTEIN"/>
    <property type="match status" value="1"/>
</dbReference>
<dbReference type="PANTHER" id="PTHR21256">
    <property type="entry name" value="HISTIDINOL DEHYDROGENASE HDH"/>
    <property type="match status" value="1"/>
</dbReference>
<dbReference type="Pfam" id="PF00815">
    <property type="entry name" value="Histidinol_dh"/>
    <property type="match status" value="1"/>
</dbReference>
<dbReference type="PIRSF" id="PIRSF000099">
    <property type="entry name" value="Histidinol_dh"/>
    <property type="match status" value="1"/>
</dbReference>
<dbReference type="PRINTS" id="PR00083">
    <property type="entry name" value="HOLDHDRGNASE"/>
</dbReference>
<dbReference type="SUPFAM" id="SSF53720">
    <property type="entry name" value="ALDH-like"/>
    <property type="match status" value="1"/>
</dbReference>
<dbReference type="PROSITE" id="PS00611">
    <property type="entry name" value="HISOL_DEHYDROGENASE"/>
    <property type="match status" value="1"/>
</dbReference>
<protein>
    <recommendedName>
        <fullName evidence="1">Histidinol dehydrogenase</fullName>
        <shortName evidence="1">HDH</shortName>
        <ecNumber evidence="1">1.1.1.23</ecNumber>
    </recommendedName>
</protein>